<accession>A4FLL9</accession>
<organism>
    <name type="scientific">Saccharopolyspora erythraea (strain ATCC 11635 / DSM 40517 / JCM 4748 / NBRC 13426 / NCIMB 8594 / NRRL 2338)</name>
    <dbReference type="NCBI Taxonomy" id="405948"/>
    <lineage>
        <taxon>Bacteria</taxon>
        <taxon>Bacillati</taxon>
        <taxon>Actinomycetota</taxon>
        <taxon>Actinomycetes</taxon>
        <taxon>Pseudonocardiales</taxon>
        <taxon>Pseudonocardiaceae</taxon>
        <taxon>Saccharopolyspora</taxon>
    </lineage>
</organism>
<evidence type="ECO:0000255" key="1">
    <source>
        <dbReference type="HAMAP-Rule" id="MF_01014"/>
    </source>
</evidence>
<name>HIS4_SACEN</name>
<comment type="catalytic activity">
    <reaction evidence="1">
        <text>1-(5-phospho-beta-D-ribosyl)-5-[(5-phospho-beta-D-ribosylamino)methylideneamino]imidazole-4-carboxamide = 5-[(5-phospho-1-deoxy-D-ribulos-1-ylimino)methylamino]-1-(5-phospho-beta-D-ribosyl)imidazole-4-carboxamide</text>
        <dbReference type="Rhea" id="RHEA:15469"/>
        <dbReference type="ChEBI" id="CHEBI:58435"/>
        <dbReference type="ChEBI" id="CHEBI:58525"/>
        <dbReference type="EC" id="5.3.1.16"/>
    </reaction>
</comment>
<comment type="pathway">
    <text evidence="1">Amino-acid biosynthesis; L-histidine biosynthesis; L-histidine from 5-phospho-alpha-D-ribose 1-diphosphate: step 4/9.</text>
</comment>
<comment type="subcellular location">
    <subcellularLocation>
        <location evidence="1">Cytoplasm</location>
    </subcellularLocation>
</comment>
<comment type="similarity">
    <text evidence="1">Belongs to the HisA/HisF family.</text>
</comment>
<feature type="chain" id="PRO_0000290532" description="1-(5-phosphoribosyl)-5-[(5-phosphoribosylamino)methylideneamino] imidazole-4-carboxamide isomerase">
    <location>
        <begin position="1"/>
        <end position="243"/>
    </location>
</feature>
<feature type="active site" description="Proton acceptor" evidence="1">
    <location>
        <position position="10"/>
    </location>
</feature>
<feature type="active site" description="Proton donor" evidence="1">
    <location>
        <position position="129"/>
    </location>
</feature>
<reference key="1">
    <citation type="journal article" date="2007" name="Nat. Biotechnol.">
        <title>Complete genome sequence of the erythromycin-producing bacterium Saccharopolyspora erythraea NRRL23338.</title>
        <authorList>
            <person name="Oliynyk M."/>
            <person name="Samborskyy M."/>
            <person name="Lester J.B."/>
            <person name="Mironenko T."/>
            <person name="Scott N."/>
            <person name="Dickens S."/>
            <person name="Haydock S.F."/>
            <person name="Leadlay P.F."/>
        </authorList>
    </citation>
    <scope>NUCLEOTIDE SEQUENCE [LARGE SCALE GENOMIC DNA]</scope>
    <source>
        <strain>ATCC 11635 / DSM 40517 / JCM 4748 / NBRC 13426 / NCIMB 8594 / NRRL 2338</strain>
    </source>
</reference>
<proteinExistence type="inferred from homology"/>
<protein>
    <recommendedName>
        <fullName evidence="1">1-(5-phosphoribosyl)-5-[(5-phosphoribosylamino)methylideneamino] imidazole-4-carboxamide isomerase</fullName>
        <ecNumber evidence="1">5.3.1.16</ecNumber>
    </recommendedName>
    <alternativeName>
        <fullName evidence="1">Phosphoribosylformimino-5-aminoimidazole carboxamide ribotide isomerase</fullName>
    </alternativeName>
</protein>
<keyword id="KW-0028">Amino-acid biosynthesis</keyword>
<keyword id="KW-0963">Cytoplasm</keyword>
<keyword id="KW-0368">Histidine biosynthesis</keyword>
<keyword id="KW-0413">Isomerase</keyword>
<keyword id="KW-1185">Reference proteome</keyword>
<gene>
    <name evidence="1" type="primary">hisA</name>
    <name type="ordered locus">SACE_5759</name>
</gene>
<dbReference type="EC" id="5.3.1.16" evidence="1"/>
<dbReference type="EMBL" id="AM420293">
    <property type="protein sequence ID" value="CAM04944.1"/>
    <property type="molecule type" value="Genomic_DNA"/>
</dbReference>
<dbReference type="RefSeq" id="WP_009948067.1">
    <property type="nucleotide sequence ID" value="NC_009142.1"/>
</dbReference>
<dbReference type="SMR" id="A4FLL9"/>
<dbReference type="STRING" id="405948.SACE_5759"/>
<dbReference type="KEGG" id="sen:SACE_5759"/>
<dbReference type="eggNOG" id="COG0106">
    <property type="taxonomic scope" value="Bacteria"/>
</dbReference>
<dbReference type="HOGENOM" id="CLU_048577_1_1_11"/>
<dbReference type="OrthoDB" id="9807749at2"/>
<dbReference type="UniPathway" id="UPA00031">
    <property type="reaction ID" value="UER00009"/>
</dbReference>
<dbReference type="Proteomes" id="UP000006728">
    <property type="component" value="Chromosome"/>
</dbReference>
<dbReference type="GO" id="GO:0005737">
    <property type="term" value="C:cytoplasm"/>
    <property type="evidence" value="ECO:0007669"/>
    <property type="project" value="UniProtKB-SubCell"/>
</dbReference>
<dbReference type="GO" id="GO:0003949">
    <property type="term" value="F:1-(5-phosphoribosyl)-5-[(5-phosphoribosylamino)methylideneamino]imidazole-4-carboxamide isomerase activity"/>
    <property type="evidence" value="ECO:0007669"/>
    <property type="project" value="UniProtKB-UniRule"/>
</dbReference>
<dbReference type="GO" id="GO:0004640">
    <property type="term" value="F:phosphoribosylanthranilate isomerase activity"/>
    <property type="evidence" value="ECO:0007669"/>
    <property type="project" value="InterPro"/>
</dbReference>
<dbReference type="GO" id="GO:0000105">
    <property type="term" value="P:L-histidine biosynthetic process"/>
    <property type="evidence" value="ECO:0007669"/>
    <property type="project" value="UniProtKB-UniRule"/>
</dbReference>
<dbReference type="GO" id="GO:0000162">
    <property type="term" value="P:L-tryptophan biosynthetic process"/>
    <property type="evidence" value="ECO:0007669"/>
    <property type="project" value="InterPro"/>
</dbReference>
<dbReference type="CDD" id="cd04732">
    <property type="entry name" value="HisA"/>
    <property type="match status" value="1"/>
</dbReference>
<dbReference type="FunFam" id="3.20.20.70:FF:000009">
    <property type="entry name" value="1-(5-phosphoribosyl)-5-[(5-phosphoribosylamino)methylideneamino] imidazole-4-carboxamide isomerase"/>
    <property type="match status" value="1"/>
</dbReference>
<dbReference type="Gene3D" id="3.20.20.70">
    <property type="entry name" value="Aldolase class I"/>
    <property type="match status" value="1"/>
</dbReference>
<dbReference type="HAMAP" id="MF_01014">
    <property type="entry name" value="HisA"/>
    <property type="match status" value="1"/>
</dbReference>
<dbReference type="InterPro" id="IPR013785">
    <property type="entry name" value="Aldolase_TIM"/>
</dbReference>
<dbReference type="InterPro" id="IPR006062">
    <property type="entry name" value="His_biosynth"/>
</dbReference>
<dbReference type="InterPro" id="IPR010188">
    <property type="entry name" value="HisA/PriA_Actinobacteria"/>
</dbReference>
<dbReference type="InterPro" id="IPR044524">
    <property type="entry name" value="Isoase_HisA-like"/>
</dbReference>
<dbReference type="InterPro" id="IPR023016">
    <property type="entry name" value="Isoase_HisA-like_bact"/>
</dbReference>
<dbReference type="InterPro" id="IPR011060">
    <property type="entry name" value="RibuloseP-bd_barrel"/>
</dbReference>
<dbReference type="NCBIfam" id="TIGR01919">
    <property type="entry name" value="hisA-trpF"/>
    <property type="match status" value="1"/>
</dbReference>
<dbReference type="PANTHER" id="PTHR43090">
    <property type="entry name" value="1-(5-PHOSPHORIBOSYL)-5-[(5-PHOSPHORIBOSYLAMINO)METHYLIDENEAMINO] IMIDAZOLE-4-CARBOXAMIDE ISOMERASE"/>
    <property type="match status" value="1"/>
</dbReference>
<dbReference type="PANTHER" id="PTHR43090:SF2">
    <property type="entry name" value="1-(5-PHOSPHORIBOSYL)-5-[(5-PHOSPHORIBOSYLAMINO)METHYLIDENEAMINO] IMIDAZOLE-4-CARBOXAMIDE ISOMERASE"/>
    <property type="match status" value="1"/>
</dbReference>
<dbReference type="Pfam" id="PF00977">
    <property type="entry name" value="His_biosynth"/>
    <property type="match status" value="1"/>
</dbReference>
<dbReference type="SUPFAM" id="SSF51366">
    <property type="entry name" value="Ribulose-phoshate binding barrel"/>
    <property type="match status" value="1"/>
</dbReference>
<sequence>MSFTLLPAVDVADGQAVRLVQGAAGTETSYGDPLEAALAWQRAGAEWVHLVDLDAAFGRGSNRELLADVVAKLDVRVELSGGIRDDASLEAALATGCERVNLGTAALENPEWADRVVAEYGDRVAVGLDVRITEQGHRLAARGWTTDGGDLWEVLARLDAAGCRRYVVTDVSKDGTLQGPNVALLREVCSRTDAPVIASGGVSSVDDLVELSRLAGDGLEGSIVGKALYAGNFTLEEALAAVR</sequence>